<keyword id="KW-1003">Cell membrane</keyword>
<keyword id="KW-1015">Disulfide bond</keyword>
<keyword id="KW-0297">G-protein coupled receptor</keyword>
<keyword id="KW-0325">Glycoprotein</keyword>
<keyword id="KW-0472">Membrane</keyword>
<keyword id="KW-0552">Olfaction</keyword>
<keyword id="KW-0675">Receptor</keyword>
<keyword id="KW-1185">Reference proteome</keyword>
<keyword id="KW-0716">Sensory transduction</keyword>
<keyword id="KW-0807">Transducer</keyword>
<keyword id="KW-0812">Transmembrane</keyword>
<keyword id="KW-1133">Transmembrane helix</keyword>
<comment type="function">
    <text evidence="3">Odorant receptor.</text>
</comment>
<comment type="subcellular location">
    <subcellularLocation>
        <location>Cell membrane</location>
        <topology>Multi-pass membrane protein</topology>
    </subcellularLocation>
</comment>
<comment type="similarity">
    <text evidence="2">Belongs to the G-protein coupled receptor 1 family.</text>
</comment>
<comment type="online information" name="Human Olfactory Receptor Data Exploratorium (HORDE)">
    <link uri="http://genome.weizmann.ac.il/horde/card/index/symbol:OR4A47"/>
</comment>
<proteinExistence type="inferred from homology"/>
<accession>Q6IF82</accession>
<sequence>MEPRKNVTDFVLLGFTQNPKEQKVLFVMFLLFYILTMVGNLLIVVTVTVSETLGSPMYFFLAGLSFIDIIYSSSISPRLISGLFFGNNSISFQSCMAQLFIEHIFGGSEVFLLLVMAYDCYVAICKPLHYLVIMRQWVCVVLLVVSWVGGFLHSVFQLSIIYGLPFCGPNVIDHFFCDMYPLLKLVCTDTHAIGLLVVANGGLACTIVFLLLLISYGVILHSLKNLSQKGRQKALSTCSSHMTVVVFFFVPCIFMYARPARTFPIDKSVSVFYTVITPMLNPLIYTLRNSEMTSAMKKLWRRDLISSST</sequence>
<feature type="chain" id="PRO_0000150527" description="Olfactory receptor 4A47">
    <location>
        <begin position="1"/>
        <end position="309"/>
    </location>
</feature>
<feature type="topological domain" description="Extracellular" evidence="1">
    <location>
        <begin position="1"/>
        <end position="23"/>
    </location>
</feature>
<feature type="transmembrane region" description="Helical; Name=1" evidence="1">
    <location>
        <begin position="24"/>
        <end position="47"/>
    </location>
</feature>
<feature type="topological domain" description="Cytoplasmic" evidence="1">
    <location>
        <begin position="48"/>
        <end position="55"/>
    </location>
</feature>
<feature type="transmembrane region" description="Helical; Name=2" evidence="1">
    <location>
        <begin position="56"/>
        <end position="77"/>
    </location>
</feature>
<feature type="topological domain" description="Extracellular" evidence="1">
    <location>
        <begin position="78"/>
        <end position="98"/>
    </location>
</feature>
<feature type="transmembrane region" description="Helical; Name=3" evidence="1">
    <location>
        <begin position="99"/>
        <end position="118"/>
    </location>
</feature>
<feature type="topological domain" description="Cytoplasmic" evidence="1">
    <location>
        <begin position="119"/>
        <end position="137"/>
    </location>
</feature>
<feature type="transmembrane region" description="Helical; Name=4" evidence="1">
    <location>
        <begin position="138"/>
        <end position="156"/>
    </location>
</feature>
<feature type="topological domain" description="Extracellular" evidence="1">
    <location>
        <begin position="157"/>
        <end position="193"/>
    </location>
</feature>
<feature type="transmembrane region" description="Helical; Name=5" evidence="1">
    <location>
        <begin position="194"/>
        <end position="217"/>
    </location>
</feature>
<feature type="topological domain" description="Cytoplasmic" evidence="1">
    <location>
        <begin position="218"/>
        <end position="233"/>
    </location>
</feature>
<feature type="transmembrane region" description="Helical; Name=6" evidence="1">
    <location>
        <begin position="234"/>
        <end position="256"/>
    </location>
</feature>
<feature type="topological domain" description="Extracellular" evidence="1">
    <location>
        <begin position="257"/>
        <end position="267"/>
    </location>
</feature>
<feature type="transmembrane region" description="Helical; Name=7" evidence="1">
    <location>
        <begin position="268"/>
        <end position="287"/>
    </location>
</feature>
<feature type="topological domain" description="Cytoplasmic" evidence="1">
    <location>
        <begin position="288"/>
        <end position="309"/>
    </location>
</feature>
<feature type="glycosylation site" description="N-linked (GlcNAc...) asparagine" evidence="1">
    <location>
        <position position="6"/>
    </location>
</feature>
<feature type="glycosylation site" description="N-linked (GlcNAc...) asparagine" evidence="1">
    <location>
        <position position="87"/>
    </location>
</feature>
<feature type="disulfide bond" evidence="2">
    <location>
        <begin position="95"/>
        <end position="187"/>
    </location>
</feature>
<feature type="sequence variant" id="VAR_047759" description="In dbSNP:rs12805819.">
    <original>G</original>
    <variation>D</variation>
    <location>
        <position position="82"/>
    </location>
</feature>
<feature type="sequence variant" id="VAR_047760" description="In dbSNP:rs7103557.">
    <original>I</original>
    <variation>L</variation>
    <location>
        <position position="104"/>
    </location>
</feature>
<feature type="sequence variant" id="VAR_047761" description="In dbSNP:rs7103992.">
    <original>V</original>
    <variation>M</variation>
    <location>
        <position position="145"/>
    </location>
</feature>
<feature type="sequence variant" id="VAR_047762" description="In dbSNP:rs7103932.">
    <original>A</original>
    <variation>D</variation>
    <location>
        <position position="192"/>
    </location>
</feature>
<gene>
    <name type="primary">OR4A47</name>
</gene>
<dbReference type="EMBL" id="AC134982">
    <property type="status" value="NOT_ANNOTATED_CDS"/>
    <property type="molecule type" value="Genomic_DNA"/>
</dbReference>
<dbReference type="EMBL" id="BK004380">
    <property type="protein sequence ID" value="DAA04778.1"/>
    <property type="molecule type" value="Genomic_DNA"/>
</dbReference>
<dbReference type="CCDS" id="CCDS31490.1"/>
<dbReference type="RefSeq" id="NP_001005512.2">
    <property type="nucleotide sequence ID" value="NM_001005512.2"/>
</dbReference>
<dbReference type="SMR" id="Q6IF82"/>
<dbReference type="FunCoup" id="Q6IF82">
    <property type="interactions" value="416"/>
</dbReference>
<dbReference type="STRING" id="9606.ENSP00000412752"/>
<dbReference type="GlyCosmos" id="Q6IF82">
    <property type="glycosylation" value="2 sites, No reported glycans"/>
</dbReference>
<dbReference type="GlyGen" id="Q6IF82">
    <property type="glycosylation" value="2 sites"/>
</dbReference>
<dbReference type="iPTMnet" id="Q6IF82"/>
<dbReference type="PhosphoSitePlus" id="Q6IF82"/>
<dbReference type="BioMuta" id="OR4A47"/>
<dbReference type="DMDM" id="215273863"/>
<dbReference type="PaxDb" id="9606-ENSP00000412752"/>
<dbReference type="Antibodypedia" id="53219">
    <property type="antibodies" value="91 antibodies from 21 providers"/>
</dbReference>
<dbReference type="DNASU" id="403253"/>
<dbReference type="Ensembl" id="ENST00000446524.2">
    <property type="protein sequence ID" value="ENSP00000412752.1"/>
    <property type="gene ID" value="ENSG00000237388.3"/>
</dbReference>
<dbReference type="GeneID" id="403253"/>
<dbReference type="KEGG" id="hsa:403253"/>
<dbReference type="MANE-Select" id="ENST00000446524.2">
    <property type="protein sequence ID" value="ENSP00000412752.1"/>
    <property type="RefSeq nucleotide sequence ID" value="NM_001005512.2"/>
    <property type="RefSeq protein sequence ID" value="NP_001005512.2"/>
</dbReference>
<dbReference type="UCSC" id="uc010rhx.3">
    <property type="organism name" value="human"/>
</dbReference>
<dbReference type="AGR" id="HGNC:31266"/>
<dbReference type="CTD" id="403253"/>
<dbReference type="GeneCards" id="OR4A47"/>
<dbReference type="HGNC" id="HGNC:31266">
    <property type="gene designation" value="OR4A47"/>
</dbReference>
<dbReference type="HPA" id="ENSG00000237388">
    <property type="expression patterns" value="Not detected"/>
</dbReference>
<dbReference type="neXtProt" id="NX_Q6IF82"/>
<dbReference type="OpenTargets" id="ENSG00000237388"/>
<dbReference type="PharmGKB" id="PA134952685"/>
<dbReference type="VEuPathDB" id="HostDB:ENSG00000237388"/>
<dbReference type="eggNOG" id="ENOG502TEH7">
    <property type="taxonomic scope" value="Eukaryota"/>
</dbReference>
<dbReference type="GeneTree" id="ENSGT00940000159605"/>
<dbReference type="HOGENOM" id="CLU_012526_8_1_1"/>
<dbReference type="InParanoid" id="Q6IF82"/>
<dbReference type="OMA" id="CTDTHAI"/>
<dbReference type="OrthoDB" id="10017003at2759"/>
<dbReference type="PAN-GO" id="Q6IF82">
    <property type="GO annotations" value="2 GO annotations based on evolutionary models"/>
</dbReference>
<dbReference type="PhylomeDB" id="Q6IF82"/>
<dbReference type="TreeFam" id="TF337350"/>
<dbReference type="PathwayCommons" id="Q6IF82"/>
<dbReference type="Reactome" id="R-HSA-9752946">
    <property type="pathway name" value="Expression and translocation of olfactory receptors"/>
</dbReference>
<dbReference type="BioGRID-ORCS" id="403253">
    <property type="hits" value="33 hits in 692 CRISPR screens"/>
</dbReference>
<dbReference type="GeneWiki" id="OR4A47"/>
<dbReference type="GenomeRNAi" id="403253"/>
<dbReference type="Pharos" id="Q6IF82">
    <property type="development level" value="Tdark"/>
</dbReference>
<dbReference type="PRO" id="PR:Q6IF82"/>
<dbReference type="Proteomes" id="UP000005640">
    <property type="component" value="Chromosome 11"/>
</dbReference>
<dbReference type="RNAct" id="Q6IF82">
    <property type="molecule type" value="protein"/>
</dbReference>
<dbReference type="Bgee" id="ENSG00000237388">
    <property type="expression patterns" value="Expressed in granulocyte and 2 other cell types or tissues"/>
</dbReference>
<dbReference type="GO" id="GO:0005886">
    <property type="term" value="C:plasma membrane"/>
    <property type="evidence" value="ECO:0000318"/>
    <property type="project" value="GO_Central"/>
</dbReference>
<dbReference type="GO" id="GO:0004930">
    <property type="term" value="F:G protein-coupled receptor activity"/>
    <property type="evidence" value="ECO:0007669"/>
    <property type="project" value="UniProtKB-KW"/>
</dbReference>
<dbReference type="GO" id="GO:0004984">
    <property type="term" value="F:olfactory receptor activity"/>
    <property type="evidence" value="ECO:0000318"/>
    <property type="project" value="GO_Central"/>
</dbReference>
<dbReference type="CDD" id="cd15939">
    <property type="entry name" value="7tmA_OR4A-like"/>
    <property type="match status" value="1"/>
</dbReference>
<dbReference type="FunFam" id="1.10.1220.70:FF:000001">
    <property type="entry name" value="Olfactory receptor"/>
    <property type="match status" value="1"/>
</dbReference>
<dbReference type="FunFam" id="1.20.1070.10:FF:000007">
    <property type="entry name" value="Olfactory receptor"/>
    <property type="match status" value="1"/>
</dbReference>
<dbReference type="Gene3D" id="1.20.1070.10">
    <property type="entry name" value="Rhodopsin 7-helix transmembrane proteins"/>
    <property type="match status" value="1"/>
</dbReference>
<dbReference type="InterPro" id="IPR000276">
    <property type="entry name" value="GPCR_Rhodpsn"/>
</dbReference>
<dbReference type="InterPro" id="IPR017452">
    <property type="entry name" value="GPCR_Rhodpsn_7TM"/>
</dbReference>
<dbReference type="InterPro" id="IPR000725">
    <property type="entry name" value="Olfact_rcpt"/>
</dbReference>
<dbReference type="InterPro" id="IPR050427">
    <property type="entry name" value="Olfactory_Receptors"/>
</dbReference>
<dbReference type="PANTHER" id="PTHR48002">
    <property type="entry name" value="OLFACTORY RECEPTOR"/>
    <property type="match status" value="1"/>
</dbReference>
<dbReference type="Pfam" id="PF13853">
    <property type="entry name" value="7tm_4"/>
    <property type="match status" value="1"/>
</dbReference>
<dbReference type="PRINTS" id="PR00237">
    <property type="entry name" value="GPCRRHODOPSN"/>
</dbReference>
<dbReference type="PRINTS" id="PR00245">
    <property type="entry name" value="OLFACTORYR"/>
</dbReference>
<dbReference type="SUPFAM" id="SSF81321">
    <property type="entry name" value="Family A G protein-coupled receptor-like"/>
    <property type="match status" value="1"/>
</dbReference>
<dbReference type="PROSITE" id="PS50262">
    <property type="entry name" value="G_PROTEIN_RECEP_F1_2"/>
    <property type="match status" value="1"/>
</dbReference>
<name>O4A47_HUMAN</name>
<reference key="1">
    <citation type="journal article" date="2006" name="Nature">
        <title>Human chromosome 11 DNA sequence and analysis including novel gene identification.</title>
        <authorList>
            <person name="Taylor T.D."/>
            <person name="Noguchi H."/>
            <person name="Totoki Y."/>
            <person name="Toyoda A."/>
            <person name="Kuroki Y."/>
            <person name="Dewar K."/>
            <person name="Lloyd C."/>
            <person name="Itoh T."/>
            <person name="Takeda T."/>
            <person name="Kim D.-W."/>
            <person name="She X."/>
            <person name="Barlow K.F."/>
            <person name="Bloom T."/>
            <person name="Bruford E."/>
            <person name="Chang J.L."/>
            <person name="Cuomo C.A."/>
            <person name="Eichler E."/>
            <person name="FitzGerald M.G."/>
            <person name="Jaffe D.B."/>
            <person name="LaButti K."/>
            <person name="Nicol R."/>
            <person name="Park H.-S."/>
            <person name="Seaman C."/>
            <person name="Sougnez C."/>
            <person name="Yang X."/>
            <person name="Zimmer A.R."/>
            <person name="Zody M.C."/>
            <person name="Birren B.W."/>
            <person name="Nusbaum C."/>
            <person name="Fujiyama A."/>
            <person name="Hattori M."/>
            <person name="Rogers J."/>
            <person name="Lander E.S."/>
            <person name="Sakaki Y."/>
        </authorList>
    </citation>
    <scope>NUCLEOTIDE SEQUENCE [LARGE SCALE GENOMIC DNA]</scope>
</reference>
<reference key="2">
    <citation type="journal article" date="2004" name="Proc. Natl. Acad. Sci. U.S.A.">
        <title>The human olfactory receptor gene family.</title>
        <authorList>
            <person name="Malnic B."/>
            <person name="Godfrey P.A."/>
            <person name="Buck L.B."/>
        </authorList>
    </citation>
    <scope>IDENTIFICATION</scope>
</reference>
<reference key="3">
    <citation type="journal article" date="2004" name="Proc. Natl. Acad. Sci. U.S.A.">
        <authorList>
            <person name="Malnic B."/>
            <person name="Godfrey P.A."/>
            <person name="Buck L.B."/>
        </authorList>
    </citation>
    <scope>ERRATUM OF PUBMED:14983052</scope>
</reference>
<organism>
    <name type="scientific">Homo sapiens</name>
    <name type="common">Human</name>
    <dbReference type="NCBI Taxonomy" id="9606"/>
    <lineage>
        <taxon>Eukaryota</taxon>
        <taxon>Metazoa</taxon>
        <taxon>Chordata</taxon>
        <taxon>Craniata</taxon>
        <taxon>Vertebrata</taxon>
        <taxon>Euteleostomi</taxon>
        <taxon>Mammalia</taxon>
        <taxon>Eutheria</taxon>
        <taxon>Euarchontoglires</taxon>
        <taxon>Primates</taxon>
        <taxon>Haplorrhini</taxon>
        <taxon>Catarrhini</taxon>
        <taxon>Hominidae</taxon>
        <taxon>Homo</taxon>
    </lineage>
</organism>
<protein>
    <recommendedName>
        <fullName>Olfactory receptor 4A47</fullName>
    </recommendedName>
    <alternativeName>
        <fullName>Olfactory receptor OR11-113</fullName>
    </alternativeName>
</protein>
<evidence type="ECO:0000255" key="1"/>
<evidence type="ECO:0000255" key="2">
    <source>
        <dbReference type="PROSITE-ProRule" id="PRU00521"/>
    </source>
</evidence>
<evidence type="ECO:0000305" key="3"/>